<protein>
    <recommendedName>
        <fullName evidence="1">Photosystem II protein D1</fullName>
        <shortName evidence="1">PSII D1 protein</shortName>
        <ecNumber evidence="1">1.10.3.9</ecNumber>
    </recommendedName>
    <alternativeName>
        <fullName evidence="1">Photosystem II Q(B) protein</fullName>
    </alternativeName>
</protein>
<sequence>MTAILERRESESLWGRFCNWITSTENRLYIGWFGVLMIPTLLTATSVFIIAFIAAPPVDIDGIREPVSGSLLYGNNIISGAIIPTSAAIGLHFYPIWEAASVDEWLYNGGPYELIVLHFLLGVACYMGREWELSFRLGMRPWIAVAYSAPVAAATAVFLIYPIGQGSFSDGMPLGISGTFNFMIVFQAEHNILMHPFHMLGVAGVFGGSLFSAMHGSLVTSSLIRETTENESANEGYRFGQEEETYNIVAAHGYFGRLIFQYASFNNSRSLHFFLAAWPVVGIWFTALGISTMAFNLNGFNFNQSVVDSQGRVINTWADIINRANLGMEVMHERNAHNFPLDLAAVEAPSTNG</sequence>
<comment type="function">
    <text evidence="1">Photosystem II (PSII) is a light-driven water:plastoquinone oxidoreductase that uses light energy to abstract electrons from H(2)O, generating O(2) and a proton gradient subsequently used for ATP formation. It consists of a core antenna complex that captures photons, and an electron transfer chain that converts photonic excitation into a charge separation. The D1/D2 (PsbA/PsbD) reaction center heterodimer binds P680, the primary electron donor of PSII as well as several subsequent electron acceptors.</text>
</comment>
<comment type="catalytic activity">
    <reaction evidence="1">
        <text>2 a plastoquinone + 4 hnu + 2 H2O = 2 a plastoquinol + O2</text>
        <dbReference type="Rhea" id="RHEA:36359"/>
        <dbReference type="Rhea" id="RHEA-COMP:9561"/>
        <dbReference type="Rhea" id="RHEA-COMP:9562"/>
        <dbReference type="ChEBI" id="CHEBI:15377"/>
        <dbReference type="ChEBI" id="CHEBI:15379"/>
        <dbReference type="ChEBI" id="CHEBI:17757"/>
        <dbReference type="ChEBI" id="CHEBI:30212"/>
        <dbReference type="ChEBI" id="CHEBI:62192"/>
        <dbReference type="EC" id="1.10.3.9"/>
    </reaction>
</comment>
<comment type="cofactor">
    <text evidence="1">The D1/D2 heterodimer binds P680, chlorophylls that are the primary electron donor of PSII, and subsequent electron acceptors. It shares a non-heme iron and each subunit binds pheophytin, quinone, additional chlorophylls, carotenoids and lipids. D1 provides most of the ligands for the Mn4-Ca-O5 cluster of the oxygen-evolving complex (OEC). There is also a Cl(-1) ion associated with D1 and D2, which is required for oxygen evolution. The PSII complex binds additional chlorophylls, carotenoids and specific lipids.</text>
</comment>
<comment type="subunit">
    <text evidence="1">PSII is composed of 1 copy each of membrane proteins PsbA, PsbB, PsbC, PsbD, PsbE, PsbF, PsbH, PsbI, PsbJ, PsbK, PsbL, PsbM, PsbT, PsbX, PsbY, PsbZ, Psb30/Ycf12, at least 3 peripheral proteins of the oxygen-evolving complex and a large number of cofactors. It forms dimeric complexes.</text>
</comment>
<comment type="subcellular location">
    <subcellularLocation>
        <location evidence="1">Plastid</location>
        <location evidence="1">Chloroplast thylakoid membrane</location>
        <topology evidence="1">Multi-pass membrane protein</topology>
    </subcellularLocation>
</comment>
<comment type="PTM">
    <text evidence="1">Tyr-161 forms a radical intermediate that is referred to as redox-active TyrZ, YZ or Y-Z.</text>
</comment>
<comment type="PTM">
    <text evidence="1">C-terminally processed by CTPA; processing is essential to allow assembly of the oxygen-evolving complex and thus photosynthetic growth.</text>
</comment>
<comment type="miscellaneous">
    <text evidence="1">2 of the reaction center chlorophylls (ChlD1 and ChlD2) are entirely coordinated by water.</text>
</comment>
<comment type="miscellaneous">
    <text evidence="1">Herbicides such as atrazine, BNT, diuron or ioxynil bind in the Q(B) binding site and block subsequent electron transfer.</text>
</comment>
<comment type="similarity">
    <text evidence="1">Belongs to the reaction center PufL/M/PsbA/D family.</text>
</comment>
<feature type="initiator methionine" description="Removed" evidence="1">
    <location>
        <position position="1"/>
    </location>
</feature>
<feature type="chain" id="PRO_0000340048" description="Photosystem II protein D1" evidence="1">
    <location>
        <begin position="2"/>
        <end position="344"/>
    </location>
</feature>
<feature type="propeptide" id="PRO_0000340049" evidence="1">
    <location>
        <begin position="345"/>
        <end position="353"/>
    </location>
</feature>
<feature type="transmembrane region" description="Helical" evidence="1">
    <location>
        <begin position="29"/>
        <end position="46"/>
    </location>
</feature>
<feature type="transmembrane region" description="Helical" evidence="1">
    <location>
        <begin position="118"/>
        <end position="133"/>
    </location>
</feature>
<feature type="transmembrane region" description="Helical" evidence="1">
    <location>
        <begin position="142"/>
        <end position="156"/>
    </location>
</feature>
<feature type="transmembrane region" description="Helical" evidence="1">
    <location>
        <begin position="197"/>
        <end position="218"/>
    </location>
</feature>
<feature type="transmembrane region" description="Helical" evidence="1">
    <location>
        <begin position="274"/>
        <end position="288"/>
    </location>
</feature>
<feature type="binding site" description="axial binding residue" evidence="1">
    <location>
        <position position="118"/>
    </location>
    <ligand>
        <name>chlorophyll a</name>
        <dbReference type="ChEBI" id="CHEBI:58416"/>
        <label>ChlzD1</label>
    </ligand>
    <ligandPart>
        <name>Mg</name>
        <dbReference type="ChEBI" id="CHEBI:25107"/>
    </ligandPart>
</feature>
<feature type="binding site" evidence="1">
    <location>
        <position position="126"/>
    </location>
    <ligand>
        <name>pheophytin a</name>
        <dbReference type="ChEBI" id="CHEBI:136840"/>
        <label>D1</label>
    </ligand>
</feature>
<feature type="binding site" evidence="1">
    <location>
        <position position="170"/>
    </location>
    <ligand>
        <name>[CaMn4O5] cluster</name>
        <dbReference type="ChEBI" id="CHEBI:189552"/>
    </ligand>
</feature>
<feature type="binding site" evidence="1">
    <location>
        <position position="189"/>
    </location>
    <ligand>
        <name>[CaMn4O5] cluster</name>
        <dbReference type="ChEBI" id="CHEBI:189552"/>
    </ligand>
</feature>
<feature type="binding site" description="axial binding residue" evidence="1">
    <location>
        <position position="198"/>
    </location>
    <ligand>
        <name>chlorophyll a</name>
        <dbReference type="ChEBI" id="CHEBI:58416"/>
        <label>PD1</label>
    </ligand>
    <ligandPart>
        <name>Mg</name>
        <dbReference type="ChEBI" id="CHEBI:25107"/>
    </ligandPart>
</feature>
<feature type="binding site" evidence="1">
    <location>
        <position position="215"/>
    </location>
    <ligand>
        <name>a quinone</name>
        <dbReference type="ChEBI" id="CHEBI:132124"/>
        <label>B</label>
    </ligand>
</feature>
<feature type="binding site" evidence="1">
    <location>
        <position position="215"/>
    </location>
    <ligand>
        <name>Fe cation</name>
        <dbReference type="ChEBI" id="CHEBI:24875"/>
        <note>ligand shared with heterodimeric partner</note>
    </ligand>
</feature>
<feature type="binding site" evidence="1">
    <location>
        <begin position="264"/>
        <end position="265"/>
    </location>
    <ligand>
        <name>a quinone</name>
        <dbReference type="ChEBI" id="CHEBI:132124"/>
        <label>B</label>
    </ligand>
</feature>
<feature type="binding site" evidence="1">
    <location>
        <position position="272"/>
    </location>
    <ligand>
        <name>Fe cation</name>
        <dbReference type="ChEBI" id="CHEBI:24875"/>
        <note>ligand shared with heterodimeric partner</note>
    </ligand>
</feature>
<feature type="binding site" evidence="1">
    <location>
        <position position="332"/>
    </location>
    <ligand>
        <name>[CaMn4O5] cluster</name>
        <dbReference type="ChEBI" id="CHEBI:189552"/>
    </ligand>
</feature>
<feature type="binding site" evidence="1">
    <location>
        <position position="333"/>
    </location>
    <ligand>
        <name>[CaMn4O5] cluster</name>
        <dbReference type="ChEBI" id="CHEBI:189552"/>
    </ligand>
</feature>
<feature type="binding site" evidence="1">
    <location>
        <position position="342"/>
    </location>
    <ligand>
        <name>[CaMn4O5] cluster</name>
        <dbReference type="ChEBI" id="CHEBI:189552"/>
    </ligand>
</feature>
<feature type="binding site" evidence="1">
    <location>
        <position position="344"/>
    </location>
    <ligand>
        <name>[CaMn4O5] cluster</name>
        <dbReference type="ChEBI" id="CHEBI:189552"/>
    </ligand>
</feature>
<feature type="site" description="Tyrosine radical intermediate" evidence="1">
    <location>
        <position position="161"/>
    </location>
</feature>
<feature type="site" description="Stabilizes free radical intermediate" evidence="1">
    <location>
        <position position="190"/>
    </location>
</feature>
<feature type="site" description="Cleavage; by CTPA" evidence="1">
    <location>
        <begin position="344"/>
        <end position="345"/>
    </location>
</feature>
<feature type="modified residue" description="N-acetylthreonine" evidence="1">
    <location>
        <position position="2"/>
    </location>
</feature>
<feature type="modified residue" description="Phosphothreonine" evidence="1">
    <location>
        <position position="2"/>
    </location>
</feature>
<evidence type="ECO:0000255" key="1">
    <source>
        <dbReference type="HAMAP-Rule" id="MF_01379"/>
    </source>
</evidence>
<name>PSBA_PELHO</name>
<geneLocation type="chloroplast"/>
<accession>Q06FY1</accession>
<reference key="1">
    <citation type="journal article" date="2006" name="Mol. Biol. Evol.">
        <title>The complete chloroplast genome sequence of Pelargonium x hortorum: organization and evolution of the largest and most highly rearranged chloroplast genome of land plants.</title>
        <authorList>
            <person name="Chumley T.W."/>
            <person name="Palmer J.D."/>
            <person name="Mower J.P."/>
            <person name="Fourcade H.M."/>
            <person name="Calie P.J."/>
            <person name="Boore J.L."/>
            <person name="Jansen R.K."/>
        </authorList>
    </citation>
    <scope>NUCLEOTIDE SEQUENCE [LARGE SCALE GENOMIC DNA]</scope>
    <source>
        <strain>cv. Ringo White</strain>
    </source>
</reference>
<gene>
    <name evidence="1" type="primary">psbA</name>
</gene>
<keyword id="KW-0007">Acetylation</keyword>
<keyword id="KW-0106">Calcium</keyword>
<keyword id="KW-0148">Chlorophyll</keyword>
<keyword id="KW-0150">Chloroplast</keyword>
<keyword id="KW-0157">Chromophore</keyword>
<keyword id="KW-0249">Electron transport</keyword>
<keyword id="KW-0359">Herbicide resistance</keyword>
<keyword id="KW-0408">Iron</keyword>
<keyword id="KW-0460">Magnesium</keyword>
<keyword id="KW-0464">Manganese</keyword>
<keyword id="KW-0472">Membrane</keyword>
<keyword id="KW-0479">Metal-binding</keyword>
<keyword id="KW-0560">Oxidoreductase</keyword>
<keyword id="KW-0597">Phosphoprotein</keyword>
<keyword id="KW-0602">Photosynthesis</keyword>
<keyword id="KW-0604">Photosystem II</keyword>
<keyword id="KW-0934">Plastid</keyword>
<keyword id="KW-0793">Thylakoid</keyword>
<keyword id="KW-0812">Transmembrane</keyword>
<keyword id="KW-1133">Transmembrane helix</keyword>
<keyword id="KW-0813">Transport</keyword>
<dbReference type="EC" id="1.10.3.9" evidence="1"/>
<dbReference type="EMBL" id="DQ897681">
    <property type="protein sequence ID" value="ABI17241.1"/>
    <property type="molecule type" value="Genomic_DNA"/>
</dbReference>
<dbReference type="RefSeq" id="YP_784050.1">
    <property type="nucleotide sequence ID" value="NC_008454.1"/>
</dbReference>
<dbReference type="SMR" id="Q06FY1"/>
<dbReference type="GeneID" id="4362779"/>
<dbReference type="GO" id="GO:0009535">
    <property type="term" value="C:chloroplast thylakoid membrane"/>
    <property type="evidence" value="ECO:0007669"/>
    <property type="project" value="UniProtKB-SubCell"/>
</dbReference>
<dbReference type="GO" id="GO:0009523">
    <property type="term" value="C:photosystem II"/>
    <property type="evidence" value="ECO:0007669"/>
    <property type="project" value="UniProtKB-KW"/>
</dbReference>
<dbReference type="GO" id="GO:0016168">
    <property type="term" value="F:chlorophyll binding"/>
    <property type="evidence" value="ECO:0007669"/>
    <property type="project" value="UniProtKB-UniRule"/>
</dbReference>
<dbReference type="GO" id="GO:0045156">
    <property type="term" value="F:electron transporter, transferring electrons within the cyclic electron transport pathway of photosynthesis activity"/>
    <property type="evidence" value="ECO:0007669"/>
    <property type="project" value="InterPro"/>
</dbReference>
<dbReference type="GO" id="GO:0005506">
    <property type="term" value="F:iron ion binding"/>
    <property type="evidence" value="ECO:0007669"/>
    <property type="project" value="UniProtKB-UniRule"/>
</dbReference>
<dbReference type="GO" id="GO:0016682">
    <property type="term" value="F:oxidoreductase activity, acting on diphenols and related substances as donors, oxygen as acceptor"/>
    <property type="evidence" value="ECO:0007669"/>
    <property type="project" value="UniProtKB-UniRule"/>
</dbReference>
<dbReference type="GO" id="GO:0010242">
    <property type="term" value="F:oxygen evolving activity"/>
    <property type="evidence" value="ECO:0007669"/>
    <property type="project" value="UniProtKB-EC"/>
</dbReference>
<dbReference type="GO" id="GO:0009772">
    <property type="term" value="P:photosynthetic electron transport in photosystem II"/>
    <property type="evidence" value="ECO:0007669"/>
    <property type="project" value="InterPro"/>
</dbReference>
<dbReference type="GO" id="GO:0009635">
    <property type="term" value="P:response to herbicide"/>
    <property type="evidence" value="ECO:0007669"/>
    <property type="project" value="UniProtKB-KW"/>
</dbReference>
<dbReference type="CDD" id="cd09289">
    <property type="entry name" value="Photosystem-II_D1"/>
    <property type="match status" value="1"/>
</dbReference>
<dbReference type="FunFam" id="1.20.85.10:FF:000002">
    <property type="entry name" value="Photosystem II protein D1"/>
    <property type="match status" value="1"/>
</dbReference>
<dbReference type="Gene3D" id="1.20.85.10">
    <property type="entry name" value="Photosystem II protein D1-like"/>
    <property type="match status" value="1"/>
</dbReference>
<dbReference type="HAMAP" id="MF_01379">
    <property type="entry name" value="PSII_PsbA_D1"/>
    <property type="match status" value="1"/>
</dbReference>
<dbReference type="InterPro" id="IPR055266">
    <property type="entry name" value="D1/D2"/>
</dbReference>
<dbReference type="InterPro" id="IPR036854">
    <property type="entry name" value="Photo_II_D1/D2_sf"/>
</dbReference>
<dbReference type="InterPro" id="IPR000484">
    <property type="entry name" value="Photo_RC_L/M"/>
</dbReference>
<dbReference type="InterPro" id="IPR055265">
    <property type="entry name" value="Photo_RC_L/M_CS"/>
</dbReference>
<dbReference type="InterPro" id="IPR005867">
    <property type="entry name" value="PSII_D1"/>
</dbReference>
<dbReference type="NCBIfam" id="TIGR01151">
    <property type="entry name" value="psbA"/>
    <property type="match status" value="1"/>
</dbReference>
<dbReference type="PANTHER" id="PTHR33149:SF12">
    <property type="entry name" value="PHOTOSYSTEM II D2 PROTEIN"/>
    <property type="match status" value="1"/>
</dbReference>
<dbReference type="PANTHER" id="PTHR33149">
    <property type="entry name" value="PHOTOSYSTEM II PROTEIN D1"/>
    <property type="match status" value="1"/>
</dbReference>
<dbReference type="Pfam" id="PF00124">
    <property type="entry name" value="Photo_RC"/>
    <property type="match status" value="1"/>
</dbReference>
<dbReference type="PRINTS" id="PR00256">
    <property type="entry name" value="REACTNCENTRE"/>
</dbReference>
<dbReference type="SUPFAM" id="SSF81483">
    <property type="entry name" value="Bacterial photosystem II reaction centre, L and M subunits"/>
    <property type="match status" value="1"/>
</dbReference>
<dbReference type="PROSITE" id="PS00244">
    <property type="entry name" value="REACTION_CENTER"/>
    <property type="match status" value="1"/>
</dbReference>
<organism>
    <name type="scientific">Pelargonium hortorum</name>
    <name type="common">Common geranium</name>
    <name type="synonym">Pelargonium inquinans x Pelargonium zonale</name>
    <dbReference type="NCBI Taxonomy" id="4031"/>
    <lineage>
        <taxon>Eukaryota</taxon>
        <taxon>Viridiplantae</taxon>
        <taxon>Streptophyta</taxon>
        <taxon>Embryophyta</taxon>
        <taxon>Tracheophyta</taxon>
        <taxon>Spermatophyta</taxon>
        <taxon>Magnoliopsida</taxon>
        <taxon>eudicotyledons</taxon>
        <taxon>Gunneridae</taxon>
        <taxon>Pentapetalae</taxon>
        <taxon>rosids</taxon>
        <taxon>malvids</taxon>
        <taxon>Geraniales</taxon>
        <taxon>Geraniaceae</taxon>
        <taxon>Pelargonium</taxon>
    </lineage>
</organism>
<proteinExistence type="inferred from homology"/>